<accession>Q9TKD7</accession>
<evidence type="ECO:0000255" key="1">
    <source>
        <dbReference type="HAMAP-Rule" id="MF_01390"/>
    </source>
</evidence>
<geneLocation type="chloroplast"/>
<sequence length="503" mass="60009">MEEFQGYFELDRSRQDDFLYPLIFREYIYALAHDHGLNRSILFENAGYYNKSSSIIVKRLITRIYQQNPLIFSANDSIQNQFFGHNKNLYSQIISEGFAVIVEIPFSLRLVSSLERKQXAKSHNLRSIHXIFPFLEDKFSHLDYVSAVLIPYHIHLEIVVQTLRYWVKDASSLHLLRFFLHEYWNSLITPKKHITIFSKGNPRLFLFLYNXHICEYESIFLFLRNQSSHLRSTSSGIFFERIHFYVKIEDFVKVLFENDFQCILWFFKDPFMHYVRYQGKLILASKDTPLLMNKWKYYLVNLWQYHFYAWFQPGRIDINQLCKYSLDFLGYRLSVRLNSSVVRSQMLENSFLINNTMKKFETIVPIIPLIGSLSKANFCNTLGHPISKPTRADSSDSDIIDRFLRICRNLSHYHSGSSKKKSLYRVKYILRLSCVKTLARKHKRTVRTFLKRLGSEFLEEFLTEEEVVLSLIFHRTYSTSRRLYRGQIWYLDITSINDLVNYE</sequence>
<reference key="1">
    <citation type="journal article" date="2005" name="Plant Syst. Evol.">
        <title>Relationships within Myrtaceae sensu lato based on a matK phylogeny.</title>
        <authorList>
            <person name="Wilson P.G."/>
            <person name="O'Brien M.M."/>
            <person name="Heslewood M.M."/>
            <person name="Quinn C.J."/>
        </authorList>
    </citation>
    <scope>NUCLEOTIDE SEQUENCE [GENOMIC DNA]</scope>
</reference>
<dbReference type="EMBL" id="AF184705">
    <property type="protein sequence ID" value="AAF03873.4"/>
    <property type="molecule type" value="Genomic_DNA"/>
</dbReference>
<dbReference type="GO" id="GO:0009507">
    <property type="term" value="C:chloroplast"/>
    <property type="evidence" value="ECO:0007669"/>
    <property type="project" value="UniProtKB-SubCell"/>
</dbReference>
<dbReference type="GO" id="GO:0003723">
    <property type="term" value="F:RNA binding"/>
    <property type="evidence" value="ECO:0007669"/>
    <property type="project" value="UniProtKB-KW"/>
</dbReference>
<dbReference type="GO" id="GO:0006397">
    <property type="term" value="P:mRNA processing"/>
    <property type="evidence" value="ECO:0007669"/>
    <property type="project" value="UniProtKB-KW"/>
</dbReference>
<dbReference type="GO" id="GO:0008380">
    <property type="term" value="P:RNA splicing"/>
    <property type="evidence" value="ECO:0007669"/>
    <property type="project" value="UniProtKB-UniRule"/>
</dbReference>
<dbReference type="GO" id="GO:0008033">
    <property type="term" value="P:tRNA processing"/>
    <property type="evidence" value="ECO:0007669"/>
    <property type="project" value="UniProtKB-KW"/>
</dbReference>
<dbReference type="HAMAP" id="MF_01390">
    <property type="entry name" value="MatK"/>
    <property type="match status" value="1"/>
</dbReference>
<dbReference type="InterPro" id="IPR024937">
    <property type="entry name" value="Domain_X"/>
</dbReference>
<dbReference type="InterPro" id="IPR002866">
    <property type="entry name" value="Maturase_MatK"/>
</dbReference>
<dbReference type="InterPro" id="IPR024942">
    <property type="entry name" value="Maturase_MatK_N"/>
</dbReference>
<dbReference type="PANTHER" id="PTHR34811">
    <property type="entry name" value="MATURASE K"/>
    <property type="match status" value="1"/>
</dbReference>
<dbReference type="PANTHER" id="PTHR34811:SF1">
    <property type="entry name" value="MATURASE K"/>
    <property type="match status" value="1"/>
</dbReference>
<dbReference type="Pfam" id="PF01348">
    <property type="entry name" value="Intron_maturas2"/>
    <property type="match status" value="1"/>
</dbReference>
<dbReference type="Pfam" id="PF01824">
    <property type="entry name" value="MatK_N"/>
    <property type="match status" value="1"/>
</dbReference>
<keyword id="KW-0150">Chloroplast</keyword>
<keyword id="KW-0507">mRNA processing</keyword>
<keyword id="KW-0934">Plastid</keyword>
<keyword id="KW-0694">RNA-binding</keyword>
<keyword id="KW-0819">tRNA processing</keyword>
<gene>
    <name evidence="1" type="primary">matK</name>
</gene>
<organism>
    <name type="scientific">Callistemon polandii</name>
    <name type="common">Gold-tipped bottlebrush</name>
    <dbReference type="NCBI Taxonomy" id="73732"/>
    <lineage>
        <taxon>Eukaryota</taxon>
        <taxon>Viridiplantae</taxon>
        <taxon>Streptophyta</taxon>
        <taxon>Embryophyta</taxon>
        <taxon>Tracheophyta</taxon>
        <taxon>Spermatophyta</taxon>
        <taxon>Magnoliopsida</taxon>
        <taxon>eudicotyledons</taxon>
        <taxon>Gunneridae</taxon>
        <taxon>Pentapetalae</taxon>
        <taxon>rosids</taxon>
        <taxon>malvids</taxon>
        <taxon>Myrtales</taxon>
        <taxon>Myrtaceae</taxon>
        <taxon>Myrtoideae</taxon>
        <taxon>Melaleuceae</taxon>
        <taxon>Callistemon</taxon>
    </lineage>
</organism>
<name>MATK_CALPO</name>
<comment type="function">
    <text evidence="1">Usually encoded in the trnK tRNA gene intron. Probably assists in splicing its own and other chloroplast group II introns.</text>
</comment>
<comment type="subcellular location">
    <subcellularLocation>
        <location>Plastid</location>
        <location>Chloroplast</location>
    </subcellularLocation>
</comment>
<comment type="similarity">
    <text evidence="1">Belongs to the intron maturase 2 family. MatK subfamily.</text>
</comment>
<proteinExistence type="inferred from homology"/>
<protein>
    <recommendedName>
        <fullName evidence="1">Maturase K</fullName>
    </recommendedName>
    <alternativeName>
        <fullName evidence="1">Intron maturase</fullName>
    </alternativeName>
</protein>
<feature type="chain" id="PRO_0000143296" description="Maturase K">
    <location>
        <begin position="1"/>
        <end position="503"/>
    </location>
</feature>